<accession>Q6CSZ0</accession>
<sequence length="57" mass="6814">MHLMYTLDAQGKRIYTLKKMTEDNEITKSAHPARFSPDDKYSRQRVTLKKRYNLLPN</sequence>
<comment type="function">
    <text evidence="1">Non-catalytic component of the H/ACA small nucleolar ribonucleoprotein (H/ACA snoRNP), which catalyzes pseudouridylation of rRNA and is required for ribosome biogenesis. This involves the isomerization of uridine such that the ribose is subsequently attached to C5, instead of the normal N1. Pseudouridine ('psi') residues may serve to stabilize the conformation of rRNAs. The H/ACA snoRNP complex also mediates pseudouridylation of other types of RNAs. The H/ACA snoRNP complex mediates pseudouridylation at position 93 in U2 snRNA.</text>
</comment>
<comment type="subunit">
    <text evidence="1">Component of the small nucleolar ribonucleoprotein particles containing H/ACA-type snoRNAs (H/ACA snoRNPs).</text>
</comment>
<comment type="subcellular location">
    <subcellularLocation>
        <location evidence="1">Nucleus</location>
        <location evidence="1">Nucleolus</location>
    </subcellularLocation>
</comment>
<comment type="similarity">
    <text evidence="3">Belongs to the NOP10 family.</text>
</comment>
<evidence type="ECO:0000250" key="1">
    <source>
        <dbReference type="UniProtKB" id="Q6Q547"/>
    </source>
</evidence>
<evidence type="ECO:0000256" key="2">
    <source>
        <dbReference type="SAM" id="MobiDB-lite"/>
    </source>
</evidence>
<evidence type="ECO:0000305" key="3"/>
<name>NOP10_KLULA</name>
<feature type="chain" id="PRO_0000149011" description="H/ACA ribonucleoprotein complex subunit NOP10">
    <location>
        <begin position="1"/>
        <end position="57"/>
    </location>
</feature>
<feature type="region of interest" description="Disordered" evidence="2">
    <location>
        <begin position="22"/>
        <end position="42"/>
    </location>
</feature>
<proteinExistence type="inferred from homology"/>
<keyword id="KW-0539">Nucleus</keyword>
<keyword id="KW-1185">Reference proteome</keyword>
<keyword id="KW-0687">Ribonucleoprotein</keyword>
<keyword id="KW-0690">Ribosome biogenesis</keyword>
<keyword id="KW-0698">rRNA processing</keyword>
<organism>
    <name type="scientific">Kluyveromyces lactis (strain ATCC 8585 / CBS 2359 / DSM 70799 / NBRC 1267 / NRRL Y-1140 / WM37)</name>
    <name type="common">Yeast</name>
    <name type="synonym">Candida sphaerica</name>
    <dbReference type="NCBI Taxonomy" id="284590"/>
    <lineage>
        <taxon>Eukaryota</taxon>
        <taxon>Fungi</taxon>
        <taxon>Dikarya</taxon>
        <taxon>Ascomycota</taxon>
        <taxon>Saccharomycotina</taxon>
        <taxon>Saccharomycetes</taxon>
        <taxon>Saccharomycetales</taxon>
        <taxon>Saccharomycetaceae</taxon>
        <taxon>Kluyveromyces</taxon>
    </lineage>
</organism>
<gene>
    <name type="primary">NOP10</name>
    <name type="ordered locus">KLLA0C16753g</name>
</gene>
<dbReference type="EMBL" id="CR382123">
    <property type="protein sequence ID" value="CAH01800.1"/>
    <property type="molecule type" value="Genomic_DNA"/>
</dbReference>
<dbReference type="RefSeq" id="XP_452949.1">
    <property type="nucleotide sequence ID" value="XM_452949.1"/>
</dbReference>
<dbReference type="SMR" id="Q6CSZ0"/>
<dbReference type="FunCoup" id="Q6CSZ0">
    <property type="interactions" value="1367"/>
</dbReference>
<dbReference type="STRING" id="284590.Q6CSZ0"/>
<dbReference type="PaxDb" id="284590-Q6CSZ0"/>
<dbReference type="KEGG" id="kla:KLLA0_C16753g"/>
<dbReference type="eggNOG" id="KOG3503">
    <property type="taxonomic scope" value="Eukaryota"/>
</dbReference>
<dbReference type="HOGENOM" id="CLU_184680_1_0_1"/>
<dbReference type="InParanoid" id="Q6CSZ0"/>
<dbReference type="OMA" id="HRIIIKK"/>
<dbReference type="Proteomes" id="UP000000598">
    <property type="component" value="Chromosome C"/>
</dbReference>
<dbReference type="GO" id="GO:0031429">
    <property type="term" value="C:box H/ACA snoRNP complex"/>
    <property type="evidence" value="ECO:0007669"/>
    <property type="project" value="TreeGrafter"/>
</dbReference>
<dbReference type="GO" id="GO:0030515">
    <property type="term" value="F:snoRNA binding"/>
    <property type="evidence" value="ECO:0007669"/>
    <property type="project" value="InterPro"/>
</dbReference>
<dbReference type="GO" id="GO:0070034">
    <property type="term" value="F:telomerase RNA binding"/>
    <property type="evidence" value="ECO:0007669"/>
    <property type="project" value="TreeGrafter"/>
</dbReference>
<dbReference type="GO" id="GO:1904874">
    <property type="term" value="P:positive regulation of telomerase RNA localization to Cajal body"/>
    <property type="evidence" value="ECO:0007669"/>
    <property type="project" value="TreeGrafter"/>
</dbReference>
<dbReference type="GO" id="GO:0031118">
    <property type="term" value="P:rRNA pseudouridine synthesis"/>
    <property type="evidence" value="ECO:0007669"/>
    <property type="project" value="TreeGrafter"/>
</dbReference>
<dbReference type="GO" id="GO:0031120">
    <property type="term" value="P:snRNA pseudouridine synthesis"/>
    <property type="evidence" value="ECO:0007669"/>
    <property type="project" value="TreeGrafter"/>
</dbReference>
<dbReference type="FunFam" id="4.10.80.300:FF:000001">
    <property type="entry name" value="H/ACA ribonucleoprotein complex subunit 3"/>
    <property type="match status" value="1"/>
</dbReference>
<dbReference type="Gene3D" id="4.10.80.300">
    <property type="match status" value="1"/>
</dbReference>
<dbReference type="InterPro" id="IPR007264">
    <property type="entry name" value="H/ACA_rnp_Nop10"/>
</dbReference>
<dbReference type="InterPro" id="IPR036756">
    <property type="entry name" value="H/ACA_rnp_Nop10_sf"/>
</dbReference>
<dbReference type="PANTHER" id="PTHR13305:SF0">
    <property type="entry name" value="H_ACA RIBONUCLEOPROTEIN COMPLEX SUBUNIT 3"/>
    <property type="match status" value="1"/>
</dbReference>
<dbReference type="PANTHER" id="PTHR13305">
    <property type="entry name" value="RIBOSOME BIOGENESIS PROTEIN NOP10"/>
    <property type="match status" value="1"/>
</dbReference>
<dbReference type="Pfam" id="PF04135">
    <property type="entry name" value="Nop10p"/>
    <property type="match status" value="1"/>
</dbReference>
<dbReference type="SUPFAM" id="SSF144210">
    <property type="entry name" value="Nop10-like SnoRNP"/>
    <property type="match status" value="1"/>
</dbReference>
<protein>
    <recommendedName>
        <fullName>H/ACA ribonucleoprotein complex subunit NOP10</fullName>
    </recommendedName>
    <alternativeName>
        <fullName>Nucleolar protein 10</fullName>
    </alternativeName>
    <alternativeName>
        <fullName>Nucleolar protein family A member 3</fullName>
    </alternativeName>
    <alternativeName>
        <fullName>snoRNP protein NOP10</fullName>
    </alternativeName>
</protein>
<reference key="1">
    <citation type="journal article" date="2004" name="Nature">
        <title>Genome evolution in yeasts.</title>
        <authorList>
            <person name="Dujon B."/>
            <person name="Sherman D."/>
            <person name="Fischer G."/>
            <person name="Durrens P."/>
            <person name="Casaregola S."/>
            <person name="Lafontaine I."/>
            <person name="de Montigny J."/>
            <person name="Marck C."/>
            <person name="Neuveglise C."/>
            <person name="Talla E."/>
            <person name="Goffard N."/>
            <person name="Frangeul L."/>
            <person name="Aigle M."/>
            <person name="Anthouard V."/>
            <person name="Babour A."/>
            <person name="Barbe V."/>
            <person name="Barnay S."/>
            <person name="Blanchin S."/>
            <person name="Beckerich J.-M."/>
            <person name="Beyne E."/>
            <person name="Bleykasten C."/>
            <person name="Boisrame A."/>
            <person name="Boyer J."/>
            <person name="Cattolico L."/>
            <person name="Confanioleri F."/>
            <person name="de Daruvar A."/>
            <person name="Despons L."/>
            <person name="Fabre E."/>
            <person name="Fairhead C."/>
            <person name="Ferry-Dumazet H."/>
            <person name="Groppi A."/>
            <person name="Hantraye F."/>
            <person name="Hennequin C."/>
            <person name="Jauniaux N."/>
            <person name="Joyet P."/>
            <person name="Kachouri R."/>
            <person name="Kerrest A."/>
            <person name="Koszul R."/>
            <person name="Lemaire M."/>
            <person name="Lesur I."/>
            <person name="Ma L."/>
            <person name="Muller H."/>
            <person name="Nicaud J.-M."/>
            <person name="Nikolski M."/>
            <person name="Oztas S."/>
            <person name="Ozier-Kalogeropoulos O."/>
            <person name="Pellenz S."/>
            <person name="Potier S."/>
            <person name="Richard G.-F."/>
            <person name="Straub M.-L."/>
            <person name="Suleau A."/>
            <person name="Swennen D."/>
            <person name="Tekaia F."/>
            <person name="Wesolowski-Louvel M."/>
            <person name="Westhof E."/>
            <person name="Wirth B."/>
            <person name="Zeniou-Meyer M."/>
            <person name="Zivanovic Y."/>
            <person name="Bolotin-Fukuhara M."/>
            <person name="Thierry A."/>
            <person name="Bouchier C."/>
            <person name="Caudron B."/>
            <person name="Scarpelli C."/>
            <person name="Gaillardin C."/>
            <person name="Weissenbach J."/>
            <person name="Wincker P."/>
            <person name="Souciet J.-L."/>
        </authorList>
    </citation>
    <scope>NUCLEOTIDE SEQUENCE [LARGE SCALE GENOMIC DNA]</scope>
    <source>
        <strain>ATCC 8585 / CBS 2359 / DSM 70799 / NBRC 1267 / NRRL Y-1140 / WM37</strain>
    </source>
</reference>